<reference key="1">
    <citation type="journal article" date="2008" name="J. Bacteriol.">
        <title>The complete genome sequence of Actinobacillus pleuropneumoniae L20 (serotype 5b).</title>
        <authorList>
            <person name="Foote S.J."/>
            <person name="Bosse J.T."/>
            <person name="Bouevitch A.B."/>
            <person name="Langford P.R."/>
            <person name="Young N.M."/>
            <person name="Nash J.H.E."/>
        </authorList>
    </citation>
    <scope>NUCLEOTIDE SEQUENCE [LARGE SCALE GENOMIC DNA]</scope>
    <source>
        <strain>L20</strain>
    </source>
</reference>
<sequence length="85" mass="9108">MATKKAGGSTRNGRDSEAKRLGVKRFGGESVLAGSIIVRQRGTKFHAGNNVGMGKDHTLFATADGKVKFEVKGEKNRKYVSIVAE</sequence>
<accession>A3N3T8</accession>
<feature type="chain" id="PRO_1000017398" description="Large ribosomal subunit protein bL27">
    <location>
        <begin position="1"/>
        <end position="85"/>
    </location>
</feature>
<feature type="region of interest" description="Disordered" evidence="2">
    <location>
        <begin position="1"/>
        <end position="20"/>
    </location>
</feature>
<organism>
    <name type="scientific">Actinobacillus pleuropneumoniae serotype 5b (strain L20)</name>
    <dbReference type="NCBI Taxonomy" id="416269"/>
    <lineage>
        <taxon>Bacteria</taxon>
        <taxon>Pseudomonadati</taxon>
        <taxon>Pseudomonadota</taxon>
        <taxon>Gammaproteobacteria</taxon>
        <taxon>Pasteurellales</taxon>
        <taxon>Pasteurellaceae</taxon>
        <taxon>Actinobacillus</taxon>
    </lineage>
</organism>
<protein>
    <recommendedName>
        <fullName evidence="1">Large ribosomal subunit protein bL27</fullName>
    </recommendedName>
    <alternativeName>
        <fullName evidence="3">50S ribosomal protein L27</fullName>
    </alternativeName>
</protein>
<comment type="similarity">
    <text evidence="1">Belongs to the bacterial ribosomal protein bL27 family.</text>
</comment>
<dbReference type="EMBL" id="CP000569">
    <property type="protein sequence ID" value="ABN75074.1"/>
    <property type="molecule type" value="Genomic_DNA"/>
</dbReference>
<dbReference type="RefSeq" id="WP_005599816.1">
    <property type="nucleotide sequence ID" value="NC_009053.1"/>
</dbReference>
<dbReference type="SMR" id="A3N3T8"/>
<dbReference type="STRING" id="416269.APL_2000"/>
<dbReference type="EnsemblBacteria" id="ABN75074">
    <property type="protein sequence ID" value="ABN75074"/>
    <property type="gene ID" value="APL_2000"/>
</dbReference>
<dbReference type="GeneID" id="48600302"/>
<dbReference type="KEGG" id="apl:APL_2000"/>
<dbReference type="eggNOG" id="COG0211">
    <property type="taxonomic scope" value="Bacteria"/>
</dbReference>
<dbReference type="HOGENOM" id="CLU_095424_4_1_6"/>
<dbReference type="Proteomes" id="UP000001432">
    <property type="component" value="Chromosome"/>
</dbReference>
<dbReference type="GO" id="GO:0022625">
    <property type="term" value="C:cytosolic large ribosomal subunit"/>
    <property type="evidence" value="ECO:0007669"/>
    <property type="project" value="TreeGrafter"/>
</dbReference>
<dbReference type="GO" id="GO:0003735">
    <property type="term" value="F:structural constituent of ribosome"/>
    <property type="evidence" value="ECO:0007669"/>
    <property type="project" value="InterPro"/>
</dbReference>
<dbReference type="GO" id="GO:0006412">
    <property type="term" value="P:translation"/>
    <property type="evidence" value="ECO:0007669"/>
    <property type="project" value="UniProtKB-UniRule"/>
</dbReference>
<dbReference type="FunFam" id="2.40.50.100:FF:000001">
    <property type="entry name" value="50S ribosomal protein L27"/>
    <property type="match status" value="1"/>
</dbReference>
<dbReference type="Gene3D" id="2.40.50.100">
    <property type="match status" value="1"/>
</dbReference>
<dbReference type="HAMAP" id="MF_00539">
    <property type="entry name" value="Ribosomal_bL27"/>
    <property type="match status" value="1"/>
</dbReference>
<dbReference type="InterPro" id="IPR001684">
    <property type="entry name" value="Ribosomal_bL27"/>
</dbReference>
<dbReference type="InterPro" id="IPR018261">
    <property type="entry name" value="Ribosomal_bL27_CS"/>
</dbReference>
<dbReference type="NCBIfam" id="TIGR00062">
    <property type="entry name" value="L27"/>
    <property type="match status" value="1"/>
</dbReference>
<dbReference type="PANTHER" id="PTHR15893:SF0">
    <property type="entry name" value="LARGE RIBOSOMAL SUBUNIT PROTEIN BL27M"/>
    <property type="match status" value="1"/>
</dbReference>
<dbReference type="PANTHER" id="PTHR15893">
    <property type="entry name" value="RIBOSOMAL PROTEIN L27"/>
    <property type="match status" value="1"/>
</dbReference>
<dbReference type="Pfam" id="PF01016">
    <property type="entry name" value="Ribosomal_L27"/>
    <property type="match status" value="1"/>
</dbReference>
<dbReference type="PRINTS" id="PR00063">
    <property type="entry name" value="RIBOSOMALL27"/>
</dbReference>
<dbReference type="SUPFAM" id="SSF110324">
    <property type="entry name" value="Ribosomal L27 protein-like"/>
    <property type="match status" value="1"/>
</dbReference>
<dbReference type="PROSITE" id="PS00831">
    <property type="entry name" value="RIBOSOMAL_L27"/>
    <property type="match status" value="1"/>
</dbReference>
<keyword id="KW-1185">Reference proteome</keyword>
<keyword id="KW-0687">Ribonucleoprotein</keyword>
<keyword id="KW-0689">Ribosomal protein</keyword>
<proteinExistence type="inferred from homology"/>
<evidence type="ECO:0000255" key="1">
    <source>
        <dbReference type="HAMAP-Rule" id="MF_00539"/>
    </source>
</evidence>
<evidence type="ECO:0000256" key="2">
    <source>
        <dbReference type="SAM" id="MobiDB-lite"/>
    </source>
</evidence>
<evidence type="ECO:0000305" key="3"/>
<gene>
    <name evidence="1" type="primary">rpmA</name>
    <name type="ordered locus">APL_2000</name>
</gene>
<name>RL27_ACTP2</name>